<protein>
    <recommendedName>
        <fullName evidence="1">EEF1A lysine methyltransferase 3</fullName>
        <ecNumber evidence="1">2.1.1.-</ecNumber>
    </recommendedName>
    <alternativeName>
        <fullName evidence="5">Methyltransferase-like protein 21B</fullName>
    </alternativeName>
    <alternativeName>
        <fullName evidence="1">Protein-lysine methyltransferase METTL21B</fullName>
    </alternativeName>
</protein>
<dbReference type="EC" id="2.1.1.-" evidence="1"/>
<dbReference type="EMBL" id="CH466578">
    <property type="protein sequence ID" value="EDL24461.1"/>
    <property type="molecule type" value="Genomic_DNA"/>
</dbReference>
<dbReference type="EMBL" id="AC134329">
    <property type="status" value="NOT_ANNOTATED_CDS"/>
    <property type="molecule type" value="Genomic_DNA"/>
</dbReference>
<dbReference type="CCDS" id="CCDS56752.1"/>
<dbReference type="RefSeq" id="NP_001191965.1">
    <property type="nucleotide sequence ID" value="NM_001205036.1"/>
</dbReference>
<dbReference type="SMR" id="D3YWP0"/>
<dbReference type="FunCoup" id="D3YWP0">
    <property type="interactions" value="130"/>
</dbReference>
<dbReference type="STRING" id="10090.ENSMUSP00000111939"/>
<dbReference type="PhosphoSitePlus" id="D3YWP0"/>
<dbReference type="PaxDb" id="10090-ENSMUSP00000111939"/>
<dbReference type="ProteomicsDB" id="277554"/>
<dbReference type="Antibodypedia" id="28949">
    <property type="antibodies" value="16 antibodies from 8 providers"/>
</dbReference>
<dbReference type="Ensembl" id="ENSMUST00000116231.4">
    <property type="protein sequence ID" value="ENSMUSP00000111939.3"/>
    <property type="gene ID" value="ENSMUSG00000080115.4"/>
</dbReference>
<dbReference type="GeneID" id="100504608"/>
<dbReference type="KEGG" id="mmu:100504608"/>
<dbReference type="UCSC" id="uc029rjq.1">
    <property type="organism name" value="mouse"/>
</dbReference>
<dbReference type="AGR" id="MGI:3645330"/>
<dbReference type="CTD" id="25895"/>
<dbReference type="MGI" id="MGI:3645330">
    <property type="gene designation" value="Eef1akmt3"/>
</dbReference>
<dbReference type="VEuPathDB" id="HostDB:ENSMUSG00000080115"/>
<dbReference type="eggNOG" id="KOG2793">
    <property type="taxonomic scope" value="Eukaryota"/>
</dbReference>
<dbReference type="GeneTree" id="ENSGT00940000161297"/>
<dbReference type="HOGENOM" id="CLU_055721_4_0_1"/>
<dbReference type="InParanoid" id="D3YWP0"/>
<dbReference type="OMA" id="HRDDKQN"/>
<dbReference type="OrthoDB" id="413520at2759"/>
<dbReference type="PhylomeDB" id="D3YWP0"/>
<dbReference type="TreeFam" id="TF313206"/>
<dbReference type="BioGRID-ORCS" id="100504608">
    <property type="hits" value="1 hit in 78 CRISPR screens"/>
</dbReference>
<dbReference type="PRO" id="PR:D3YWP0"/>
<dbReference type="Proteomes" id="UP000000589">
    <property type="component" value="Chromosome 10"/>
</dbReference>
<dbReference type="RNAct" id="D3YWP0">
    <property type="molecule type" value="protein"/>
</dbReference>
<dbReference type="Bgee" id="ENSMUSG00000080115">
    <property type="expression patterns" value="Expressed in pancreas and 29 other cell types or tissues"/>
</dbReference>
<dbReference type="GO" id="GO:0005813">
    <property type="term" value="C:centrosome"/>
    <property type="evidence" value="ECO:0000250"/>
    <property type="project" value="UniProtKB"/>
</dbReference>
<dbReference type="GO" id="GO:0005694">
    <property type="term" value="C:chromosome"/>
    <property type="evidence" value="ECO:0007669"/>
    <property type="project" value="Ensembl"/>
</dbReference>
<dbReference type="GO" id="GO:0005737">
    <property type="term" value="C:cytoplasm"/>
    <property type="evidence" value="ECO:0000250"/>
    <property type="project" value="UniProtKB"/>
</dbReference>
<dbReference type="GO" id="GO:0005654">
    <property type="term" value="C:nucleoplasm"/>
    <property type="evidence" value="ECO:0007669"/>
    <property type="project" value="Ensembl"/>
</dbReference>
<dbReference type="GO" id="GO:0032991">
    <property type="term" value="C:protein-containing complex"/>
    <property type="evidence" value="ECO:0007669"/>
    <property type="project" value="Ensembl"/>
</dbReference>
<dbReference type="GO" id="GO:0031072">
    <property type="term" value="F:heat shock protein binding"/>
    <property type="evidence" value="ECO:0007669"/>
    <property type="project" value="Ensembl"/>
</dbReference>
<dbReference type="GO" id="GO:0008168">
    <property type="term" value="F:methyltransferase activity"/>
    <property type="evidence" value="ECO:0000315"/>
    <property type="project" value="UniProtKB"/>
</dbReference>
<dbReference type="GO" id="GO:0016279">
    <property type="term" value="F:protein-lysine N-methyltransferase activity"/>
    <property type="evidence" value="ECO:0000315"/>
    <property type="project" value="UniProtKB"/>
</dbReference>
<dbReference type="GO" id="GO:0018022">
    <property type="term" value="P:peptidyl-lysine methylation"/>
    <property type="evidence" value="ECO:0000315"/>
    <property type="project" value="UniProtKB"/>
</dbReference>
<dbReference type="CDD" id="cd02440">
    <property type="entry name" value="AdoMet_MTases"/>
    <property type="match status" value="1"/>
</dbReference>
<dbReference type="FunFam" id="3.40.50.150:FF:000160">
    <property type="entry name" value="EEF1A lysine methyltransferase 3"/>
    <property type="match status" value="1"/>
</dbReference>
<dbReference type="Gene3D" id="3.40.50.150">
    <property type="entry name" value="Vaccinia Virus protein VP39"/>
    <property type="match status" value="1"/>
</dbReference>
<dbReference type="InterPro" id="IPR019410">
    <property type="entry name" value="Methyltransf_16"/>
</dbReference>
<dbReference type="InterPro" id="IPR029063">
    <property type="entry name" value="SAM-dependent_MTases_sf"/>
</dbReference>
<dbReference type="PANTHER" id="PTHR14614:SF5">
    <property type="entry name" value="EEF1A LYSINE METHYLTRANSFERASE 3"/>
    <property type="match status" value="1"/>
</dbReference>
<dbReference type="PANTHER" id="PTHR14614">
    <property type="entry name" value="HEPATOCELLULAR CARCINOMA-ASSOCIATED ANTIGEN"/>
    <property type="match status" value="1"/>
</dbReference>
<dbReference type="Pfam" id="PF10294">
    <property type="entry name" value="Methyltransf_16"/>
    <property type="match status" value="1"/>
</dbReference>
<dbReference type="SUPFAM" id="SSF53335">
    <property type="entry name" value="S-adenosyl-L-methionine-dependent methyltransferases"/>
    <property type="match status" value="1"/>
</dbReference>
<gene>
    <name evidence="1" type="primary">Eef1akmt3</name>
    <name evidence="5" type="synonym">Fam119b</name>
    <name evidence="5" type="synonym">Mettl21b</name>
    <name evidence="4" type="ORF">mCG_5197</name>
</gene>
<feature type="chain" id="PRO_0000439952" description="EEF1A lysine methyltransferase 3">
    <location>
        <begin position="1"/>
        <end position="232"/>
    </location>
</feature>
<feature type="binding site" evidence="1">
    <location>
        <position position="57"/>
    </location>
    <ligand>
        <name>S-adenosyl-L-methionine</name>
        <dbReference type="ChEBI" id="CHEBI:59789"/>
    </ligand>
</feature>
<feature type="binding site" evidence="1">
    <location>
        <begin position="83"/>
        <end position="85"/>
    </location>
    <ligand>
        <name>S-adenosyl-L-methionine</name>
        <dbReference type="ChEBI" id="CHEBI:59789"/>
    </ligand>
</feature>
<feature type="binding site" evidence="1">
    <location>
        <position position="104"/>
    </location>
    <ligand>
        <name>S-adenosyl-L-methionine</name>
        <dbReference type="ChEBI" id="CHEBI:59789"/>
    </ligand>
</feature>
<feature type="binding site" evidence="1">
    <location>
        <position position="133"/>
    </location>
    <ligand>
        <name>S-adenosyl-L-methionine</name>
        <dbReference type="ChEBI" id="CHEBI:59789"/>
    </ligand>
</feature>
<feature type="binding site" evidence="1">
    <location>
        <position position="150"/>
    </location>
    <ligand>
        <name>S-adenosyl-L-methionine</name>
        <dbReference type="ChEBI" id="CHEBI:59789"/>
    </ligand>
</feature>
<sequence>MASSRTDPETEPESVFPREIRLFTDSYSESSRFCFCGHELSITQNFGSRLGVAARVWDAALSLCDYFESQNVDFRGKKVIELGAGTGIVGILAALQGGDVTITDLPVALEQIQDNVHANVPPGGRARVCALSWGIDQHVFPGNYDLVLGADIVYLEPTFPLLLGTLRHLCGPHGTIYLASKMRAEHGAETFFRRLLPQHFHLELAQRDEDVNVNIYRARHREVAPAGQHPFC</sequence>
<evidence type="ECO:0000250" key="1">
    <source>
        <dbReference type="UniProtKB" id="Q96AZ1"/>
    </source>
</evidence>
<evidence type="ECO:0000269" key="2">
    <source>
    </source>
</evidence>
<evidence type="ECO:0000305" key="3"/>
<evidence type="ECO:0000312" key="4">
    <source>
        <dbReference type="EMBL" id="EDL24461.1"/>
    </source>
</evidence>
<evidence type="ECO:0000312" key="5">
    <source>
        <dbReference type="MGI" id="MGI:3645330"/>
    </source>
</evidence>
<organism>
    <name type="scientific">Mus musculus</name>
    <name type="common">Mouse</name>
    <dbReference type="NCBI Taxonomy" id="10090"/>
    <lineage>
        <taxon>Eukaryota</taxon>
        <taxon>Metazoa</taxon>
        <taxon>Chordata</taxon>
        <taxon>Craniata</taxon>
        <taxon>Vertebrata</taxon>
        <taxon>Euteleostomi</taxon>
        <taxon>Mammalia</taxon>
        <taxon>Eutheria</taxon>
        <taxon>Euarchontoglires</taxon>
        <taxon>Glires</taxon>
        <taxon>Rodentia</taxon>
        <taxon>Myomorpha</taxon>
        <taxon>Muroidea</taxon>
        <taxon>Muridae</taxon>
        <taxon>Murinae</taxon>
        <taxon>Mus</taxon>
        <taxon>Mus</taxon>
    </lineage>
</organism>
<proteinExistence type="inferred from homology"/>
<keyword id="KW-0963">Cytoplasm</keyword>
<keyword id="KW-0206">Cytoskeleton</keyword>
<keyword id="KW-0489">Methyltransferase</keyword>
<keyword id="KW-1185">Reference proteome</keyword>
<keyword id="KW-0949">S-adenosyl-L-methionine</keyword>
<keyword id="KW-0808">Transferase</keyword>
<accession>D3YWP0</accession>
<comment type="function">
    <text evidence="1 2">Protein-lysine methyltransferase that selectively mono-, di- and trimethylates 'Lys-165' of the translation elongation factors EEF1A1 and EEF1A2 in an aminoacyl-tRNA and GTP-dependent manner (By similarity). EEF1A1 methylation by EEF1AKMT3 is dynamic as well as inducible by stress conditions, such as ER-stress, and plays a regulatory role on mRNA translation (PubMed:28108655).</text>
</comment>
<comment type="catalytic activity">
    <reaction evidence="1">
        <text>L-lysyl-[protein] + 3 S-adenosyl-L-methionine = N(6),N(6),N(6)-trimethyl-L-lysyl-[protein] + 3 S-adenosyl-L-homocysteine + 3 H(+)</text>
        <dbReference type="Rhea" id="RHEA:54192"/>
        <dbReference type="Rhea" id="RHEA-COMP:9752"/>
        <dbReference type="Rhea" id="RHEA-COMP:13826"/>
        <dbReference type="ChEBI" id="CHEBI:15378"/>
        <dbReference type="ChEBI" id="CHEBI:29969"/>
        <dbReference type="ChEBI" id="CHEBI:57856"/>
        <dbReference type="ChEBI" id="CHEBI:59789"/>
        <dbReference type="ChEBI" id="CHEBI:61961"/>
    </reaction>
    <physiologicalReaction direction="left-to-right" evidence="1">
        <dbReference type="Rhea" id="RHEA:54193"/>
    </physiologicalReaction>
</comment>
<comment type="catalytic activity">
    <reaction evidence="1">
        <text>L-lysyl-[protein] + S-adenosyl-L-methionine = N(6)-methyl-L-lysyl-[protein] + S-adenosyl-L-homocysteine + H(+)</text>
        <dbReference type="Rhea" id="RHEA:51736"/>
        <dbReference type="Rhea" id="RHEA-COMP:9752"/>
        <dbReference type="Rhea" id="RHEA-COMP:13053"/>
        <dbReference type="ChEBI" id="CHEBI:15378"/>
        <dbReference type="ChEBI" id="CHEBI:29969"/>
        <dbReference type="ChEBI" id="CHEBI:57856"/>
        <dbReference type="ChEBI" id="CHEBI:59789"/>
        <dbReference type="ChEBI" id="CHEBI:61929"/>
    </reaction>
    <physiologicalReaction direction="left-to-right" evidence="1">
        <dbReference type="Rhea" id="RHEA:51737"/>
    </physiologicalReaction>
</comment>
<comment type="catalytic activity">
    <reaction evidence="1">
        <text>N(6)-methyl-L-lysyl-[protein] + S-adenosyl-L-methionine = N(6),N(6)-dimethyl-L-lysyl-[protein] + S-adenosyl-L-homocysteine + H(+)</text>
        <dbReference type="Rhea" id="RHEA:54196"/>
        <dbReference type="Rhea" id="RHEA-COMP:13053"/>
        <dbReference type="Rhea" id="RHEA-COMP:13827"/>
        <dbReference type="ChEBI" id="CHEBI:15378"/>
        <dbReference type="ChEBI" id="CHEBI:57856"/>
        <dbReference type="ChEBI" id="CHEBI:59789"/>
        <dbReference type="ChEBI" id="CHEBI:61929"/>
        <dbReference type="ChEBI" id="CHEBI:61976"/>
    </reaction>
    <physiologicalReaction direction="left-to-right" evidence="1">
        <dbReference type="Rhea" id="RHEA:54197"/>
    </physiologicalReaction>
</comment>
<comment type="catalytic activity">
    <reaction evidence="1">
        <text>N(6),N(6)-dimethyl-L-lysyl-[protein] + S-adenosyl-L-methionine = N(6),N(6),N(6)-trimethyl-L-lysyl-[protein] + S-adenosyl-L-homocysteine + H(+)</text>
        <dbReference type="Rhea" id="RHEA:54200"/>
        <dbReference type="Rhea" id="RHEA-COMP:13826"/>
        <dbReference type="Rhea" id="RHEA-COMP:13827"/>
        <dbReference type="ChEBI" id="CHEBI:15378"/>
        <dbReference type="ChEBI" id="CHEBI:57856"/>
        <dbReference type="ChEBI" id="CHEBI:59789"/>
        <dbReference type="ChEBI" id="CHEBI:61961"/>
        <dbReference type="ChEBI" id="CHEBI:61976"/>
    </reaction>
    <physiologicalReaction direction="left-to-right" evidence="1">
        <dbReference type="Rhea" id="RHEA:54201"/>
    </physiologicalReaction>
</comment>
<comment type="subunit">
    <text evidence="1">Interacts with members of the heat shock protein 70 and 90 families and of the TCP-1 chaperonin family, as well as with HSPD1, STIP1 and tubulin; at least some of these proteins may be methylation substrates.</text>
</comment>
<comment type="subcellular location">
    <subcellularLocation>
        <location evidence="1">Cytoplasm</location>
    </subcellularLocation>
    <subcellularLocation>
        <location evidence="1">Cytoplasm</location>
        <location evidence="1">Cytoskeleton</location>
        <location evidence="1">Microtubule organizing center</location>
        <location evidence="1">Centrosome</location>
    </subcellularLocation>
</comment>
<comment type="similarity">
    <text evidence="3">Belongs to the methyltransferase superfamily. METTL21 family.</text>
</comment>
<name>EFMT3_MOUSE</name>
<reference key="1">
    <citation type="journal article" date="2009" name="PLoS Biol.">
        <title>Lineage-specific biology revealed by a finished genome assembly of the mouse.</title>
        <authorList>
            <person name="Church D.M."/>
            <person name="Goodstadt L."/>
            <person name="Hillier L.W."/>
            <person name="Zody M.C."/>
            <person name="Goldstein S."/>
            <person name="She X."/>
            <person name="Bult C.J."/>
            <person name="Agarwala R."/>
            <person name="Cherry J.L."/>
            <person name="DiCuccio M."/>
            <person name="Hlavina W."/>
            <person name="Kapustin Y."/>
            <person name="Meric P."/>
            <person name="Maglott D."/>
            <person name="Birtle Z."/>
            <person name="Marques A.C."/>
            <person name="Graves T."/>
            <person name="Zhou S."/>
            <person name="Teague B."/>
            <person name="Potamousis K."/>
            <person name="Churas C."/>
            <person name="Place M."/>
            <person name="Herschleb J."/>
            <person name="Runnheim R."/>
            <person name="Forrest D."/>
            <person name="Amos-Landgraf J."/>
            <person name="Schwartz D.C."/>
            <person name="Cheng Z."/>
            <person name="Lindblad-Toh K."/>
            <person name="Eichler E.E."/>
            <person name="Ponting C.P."/>
        </authorList>
    </citation>
    <scope>NUCLEOTIDE SEQUENCE [LARGE SCALE GENOMIC DNA]</scope>
    <source>
        <strain>C57BL/6J</strain>
    </source>
</reference>
<reference key="2">
    <citation type="submission" date="2005-07" db="EMBL/GenBank/DDBJ databases">
        <authorList>
            <person name="Mural R.J."/>
            <person name="Adams M.D."/>
            <person name="Myers E.W."/>
            <person name="Smith H.O."/>
            <person name="Venter J.C."/>
        </authorList>
    </citation>
    <scope>NUCLEOTIDE SEQUENCE [LARGE SCALE GENOMIC DNA]</scope>
</reference>
<reference key="3">
    <citation type="journal article" date="2017" name="Nucleic Acids Res.">
        <title>The novel lysine specific methyltransferase METTL21B affects mRNA translation through inducible and dynamic methylation of Lys-165 in human eukaryotic elongation factor 1 alpha (eEF1A).</title>
        <authorList>
            <person name="Malecki J."/>
            <person name="Aileni V.K."/>
            <person name="Ho A.Y."/>
            <person name="Schwarz J."/>
            <person name="Moen A."/>
            <person name="Soerensen V."/>
            <person name="Nilges B.S."/>
            <person name="Jakobsson M.E."/>
            <person name="Leidel S.A."/>
            <person name="Falnes P.O."/>
        </authorList>
    </citation>
    <scope>FUNCTION</scope>
</reference>